<keyword id="KW-0002">3D-structure</keyword>
<keyword id="KW-0021">Allosteric enzyme</keyword>
<keyword id="KW-0903">Direct protein sequencing</keyword>
<keyword id="KW-1185">Reference proteome</keyword>
<keyword id="KW-0808">Transferase</keyword>
<keyword id="KW-0816">Tricarboxylic acid cycle</keyword>
<feature type="initiator methionine" description="Removed" evidence="2">
    <location>
        <position position="1"/>
    </location>
</feature>
<feature type="chain" id="PRO_0000169952" description="Citrate synthase">
    <location>
        <begin position="2"/>
        <end position="428"/>
    </location>
</feature>
<feature type="active site" evidence="1">
    <location>
        <position position="265"/>
    </location>
</feature>
<feature type="active site" evidence="1">
    <location>
        <position position="306"/>
    </location>
</feature>
<feature type="active site" evidence="1">
    <location>
        <position position="363"/>
    </location>
</feature>
<feature type="sequence conflict" description="In Ref. 1; AAA25769." evidence="4" ref="1">
    <original>N</original>
    <variation>T</variation>
    <location>
        <position position="153"/>
    </location>
</feature>
<feature type="sequence conflict" description="In Ref. 1; AAA25769." evidence="4" ref="1">
    <original>E</original>
    <variation>Q</variation>
    <location>
        <position position="159"/>
    </location>
</feature>
<feature type="strand" evidence="5">
    <location>
        <begin position="4"/>
        <end position="9"/>
    </location>
</feature>
<feature type="strand" evidence="5">
    <location>
        <begin position="11"/>
        <end position="13"/>
    </location>
</feature>
<feature type="strand" evidence="5">
    <location>
        <begin position="16"/>
        <end position="21"/>
    </location>
</feature>
<feature type="strand" evidence="5">
    <location>
        <begin position="24"/>
        <end position="26"/>
    </location>
</feature>
<feature type="strand" evidence="5">
    <location>
        <begin position="28"/>
        <end position="31"/>
    </location>
</feature>
<feature type="helix" evidence="5">
    <location>
        <begin position="35"/>
        <end position="37"/>
    </location>
</feature>
<feature type="strand" evidence="5">
    <location>
        <begin position="40"/>
        <end position="43"/>
    </location>
</feature>
<feature type="helix" evidence="5">
    <location>
        <begin position="45"/>
        <end position="47"/>
    </location>
</feature>
<feature type="strand" evidence="5">
    <location>
        <begin position="50"/>
        <end position="55"/>
    </location>
</feature>
<feature type="strand" evidence="5">
    <location>
        <begin position="57"/>
        <end position="61"/>
    </location>
</feature>
<feature type="turn" evidence="5">
    <location>
        <begin position="62"/>
        <end position="65"/>
    </location>
</feature>
<feature type="strand" evidence="5">
    <location>
        <begin position="66"/>
        <end position="69"/>
    </location>
</feature>
<feature type="helix" evidence="5">
    <location>
        <begin position="74"/>
        <end position="79"/>
    </location>
</feature>
<feature type="helix" evidence="5">
    <location>
        <begin position="83"/>
        <end position="92"/>
    </location>
</feature>
<feature type="helix" evidence="5">
    <location>
        <begin position="98"/>
        <end position="110"/>
    </location>
</feature>
<feature type="helix" evidence="5">
    <location>
        <begin position="117"/>
        <end position="122"/>
    </location>
</feature>
<feature type="helix" evidence="5">
    <location>
        <begin position="131"/>
        <end position="145"/>
    </location>
</feature>
<feature type="helix" evidence="5">
    <location>
        <begin position="155"/>
        <end position="181"/>
    </location>
</feature>
<feature type="helix" evidence="5">
    <location>
        <begin position="194"/>
        <end position="203"/>
    </location>
</feature>
<feature type="helix" evidence="5">
    <location>
        <begin position="214"/>
        <end position="225"/>
    </location>
</feature>
<feature type="helix" evidence="5">
    <location>
        <begin position="234"/>
        <end position="243"/>
    </location>
</feature>
<feature type="turn" evidence="5">
    <location>
        <begin position="244"/>
        <end position="246"/>
    </location>
</feature>
<feature type="helix" evidence="5">
    <location>
        <begin position="249"/>
        <end position="261"/>
    </location>
</feature>
<feature type="helix" evidence="5">
    <location>
        <begin position="263"/>
        <end position="266"/>
    </location>
</feature>
<feature type="helix" evidence="5">
    <location>
        <begin position="268"/>
        <end position="279"/>
    </location>
</feature>
<feature type="helix" evidence="5">
    <location>
        <begin position="282"/>
        <end position="284"/>
    </location>
</feature>
<feature type="helix" evidence="5">
    <location>
        <begin position="285"/>
        <end position="293"/>
    </location>
</feature>
<feature type="strand" evidence="5">
    <location>
        <begin position="302"/>
        <end position="305"/>
    </location>
</feature>
<feature type="strand" evidence="5">
    <location>
        <begin position="307"/>
        <end position="311"/>
    </location>
</feature>
<feature type="helix" evidence="5">
    <location>
        <begin position="316"/>
        <end position="330"/>
    </location>
</feature>
<feature type="helix" evidence="5">
    <location>
        <begin position="335"/>
        <end position="349"/>
    </location>
</feature>
<feature type="helix" evidence="5">
    <location>
        <begin position="351"/>
        <end position="355"/>
    </location>
</feature>
<feature type="helix" evidence="5">
    <location>
        <begin position="362"/>
        <end position="372"/>
    </location>
</feature>
<feature type="helix" evidence="5">
    <location>
        <begin position="377"/>
        <end position="379"/>
    </location>
</feature>
<feature type="helix" evidence="5">
    <location>
        <begin position="380"/>
        <end position="401"/>
    </location>
</feature>
<feature type="strand" evidence="5">
    <location>
        <begin position="410"/>
        <end position="413"/>
    </location>
</feature>
<feature type="helix" evidence="5">
    <location>
        <begin position="424"/>
        <end position="426"/>
    </location>
</feature>
<reference key="1">
    <citation type="journal article" date="1989" name="J. Bacteriol.">
        <title>Cloning, sequencing, and expression of the gene for NADH-sensitive citrate synthase of Pseudomonas aeruginosa.</title>
        <authorList>
            <person name="Donald L.J."/>
            <person name="Molgat G.F."/>
            <person name="Duckworth H.W."/>
        </authorList>
    </citation>
    <scope>NUCLEOTIDE SEQUENCE [GENOMIC DNA]</scope>
    <scope>PROTEIN SEQUENCE OF 2-9</scope>
    <scope>CATALYTIC ACTIVITY</scope>
    <scope>ACTIVITY REGULATION</scope>
    <source>
        <strain>ATCC 7700 / UM74</strain>
    </source>
</reference>
<reference key="2">
    <citation type="journal article" date="2000" name="Nature">
        <title>Complete genome sequence of Pseudomonas aeruginosa PAO1, an opportunistic pathogen.</title>
        <authorList>
            <person name="Stover C.K."/>
            <person name="Pham X.-Q.T."/>
            <person name="Erwin A.L."/>
            <person name="Mizoguchi S.D."/>
            <person name="Warrener P."/>
            <person name="Hickey M.J."/>
            <person name="Brinkman F.S.L."/>
            <person name="Hufnagle W.O."/>
            <person name="Kowalik D.J."/>
            <person name="Lagrou M."/>
            <person name="Garber R.L."/>
            <person name="Goltry L."/>
            <person name="Tolentino E."/>
            <person name="Westbrock-Wadman S."/>
            <person name="Yuan Y."/>
            <person name="Brody L.L."/>
            <person name="Coulter S.N."/>
            <person name="Folger K.R."/>
            <person name="Kas A."/>
            <person name="Larbig K."/>
            <person name="Lim R.M."/>
            <person name="Smith K.A."/>
            <person name="Spencer D.H."/>
            <person name="Wong G.K.-S."/>
            <person name="Wu Z."/>
            <person name="Paulsen I.T."/>
            <person name="Reizer J."/>
            <person name="Saier M.H. Jr."/>
            <person name="Hancock R.E.W."/>
            <person name="Lory S."/>
            <person name="Olson M.V."/>
        </authorList>
    </citation>
    <scope>NUCLEOTIDE SEQUENCE [LARGE SCALE GENOMIC DNA]</scope>
    <source>
        <strain>ATCC 15692 / DSM 22644 / CIP 104116 / JCM 14847 / LMG 12228 / 1C / PRS 101 / PAO1</strain>
    </source>
</reference>
<gene>
    <name type="primary">gltA</name>
    <name type="ordered locus">PA1580</name>
</gene>
<organism>
    <name type="scientific">Pseudomonas aeruginosa (strain ATCC 15692 / DSM 22644 / CIP 104116 / JCM 14847 / LMG 12228 / 1C / PRS 101 / PAO1)</name>
    <dbReference type="NCBI Taxonomy" id="208964"/>
    <lineage>
        <taxon>Bacteria</taxon>
        <taxon>Pseudomonadati</taxon>
        <taxon>Pseudomonadota</taxon>
        <taxon>Gammaproteobacteria</taxon>
        <taxon>Pseudomonadales</taxon>
        <taxon>Pseudomonadaceae</taxon>
        <taxon>Pseudomonas</taxon>
    </lineage>
</organism>
<dbReference type="EC" id="2.3.3.16" evidence="2"/>
<dbReference type="EMBL" id="M29728">
    <property type="protein sequence ID" value="AAA25769.1"/>
    <property type="molecule type" value="Genomic_DNA"/>
</dbReference>
<dbReference type="EMBL" id="AE004091">
    <property type="protein sequence ID" value="AAG04969.1"/>
    <property type="molecule type" value="Genomic_DNA"/>
</dbReference>
<dbReference type="PIR" id="A33596">
    <property type="entry name" value="YKPSCA"/>
</dbReference>
<dbReference type="PIR" id="B83448">
    <property type="entry name" value="B83448"/>
</dbReference>
<dbReference type="RefSeq" id="NP_250271.1">
    <property type="nucleotide sequence ID" value="NC_002516.2"/>
</dbReference>
<dbReference type="RefSeq" id="WP_003087400.1">
    <property type="nucleotide sequence ID" value="NZ_QZGE01000003.1"/>
</dbReference>
<dbReference type="PDB" id="6ZU0">
    <property type="method" value="X-ray"/>
    <property type="resolution" value="3.40 A"/>
    <property type="chains" value="A/B/C/D/E/F=1-428"/>
</dbReference>
<dbReference type="PDBsum" id="6ZU0"/>
<dbReference type="SMR" id="P14165"/>
<dbReference type="FunCoup" id="P14165">
    <property type="interactions" value="626"/>
</dbReference>
<dbReference type="STRING" id="208964.PA1580"/>
<dbReference type="PaxDb" id="208964-PA1580"/>
<dbReference type="GeneID" id="882117"/>
<dbReference type="KEGG" id="pae:PA1580"/>
<dbReference type="PATRIC" id="fig|208964.12.peg.1639"/>
<dbReference type="PseudoCAP" id="PA1580"/>
<dbReference type="HOGENOM" id="CLU_025068_0_0_6"/>
<dbReference type="InParanoid" id="P14165"/>
<dbReference type="OrthoDB" id="9800864at2"/>
<dbReference type="PhylomeDB" id="P14165"/>
<dbReference type="BioCyc" id="PAER208964:G1FZ6-1610-MONOMER"/>
<dbReference type="UniPathway" id="UPA00223">
    <property type="reaction ID" value="UER00717"/>
</dbReference>
<dbReference type="Proteomes" id="UP000002438">
    <property type="component" value="Chromosome"/>
</dbReference>
<dbReference type="GO" id="GO:0005737">
    <property type="term" value="C:cytoplasm"/>
    <property type="evidence" value="ECO:0007669"/>
    <property type="project" value="InterPro"/>
</dbReference>
<dbReference type="GO" id="GO:0004108">
    <property type="term" value="F:citrate (Si)-synthase activity"/>
    <property type="evidence" value="ECO:0007669"/>
    <property type="project" value="InterPro"/>
</dbReference>
<dbReference type="GO" id="GO:0036440">
    <property type="term" value="F:citrate synthase activity"/>
    <property type="evidence" value="ECO:0000314"/>
    <property type="project" value="PseudoCAP"/>
</dbReference>
<dbReference type="GO" id="GO:0006099">
    <property type="term" value="P:tricarboxylic acid cycle"/>
    <property type="evidence" value="ECO:0000314"/>
    <property type="project" value="PseudoCAP"/>
</dbReference>
<dbReference type="CDD" id="cd06114">
    <property type="entry name" value="EcCS_like"/>
    <property type="match status" value="1"/>
</dbReference>
<dbReference type="FunFam" id="1.10.230.10:FF:000002">
    <property type="entry name" value="Citrate synthase"/>
    <property type="match status" value="1"/>
</dbReference>
<dbReference type="Gene3D" id="2.20.28.60">
    <property type="match status" value="1"/>
</dbReference>
<dbReference type="Gene3D" id="1.10.580.10">
    <property type="entry name" value="Citrate Synthase, domain 1"/>
    <property type="match status" value="1"/>
</dbReference>
<dbReference type="Gene3D" id="1.10.230.10">
    <property type="entry name" value="Cytochrome P450-Terp, domain 2"/>
    <property type="match status" value="1"/>
</dbReference>
<dbReference type="InterPro" id="IPR016142">
    <property type="entry name" value="Citrate_synth-like_lrg_a-sub"/>
</dbReference>
<dbReference type="InterPro" id="IPR016143">
    <property type="entry name" value="Citrate_synth-like_sm_a-sub"/>
</dbReference>
<dbReference type="InterPro" id="IPR002020">
    <property type="entry name" value="Citrate_synthase"/>
</dbReference>
<dbReference type="InterPro" id="IPR019810">
    <property type="entry name" value="Citrate_synthase_AS"/>
</dbReference>
<dbReference type="InterPro" id="IPR024176">
    <property type="entry name" value="Citrate_synthase_bac-typ"/>
</dbReference>
<dbReference type="InterPro" id="IPR036969">
    <property type="entry name" value="Citrate_synthase_sf"/>
</dbReference>
<dbReference type="InterPro" id="IPR010953">
    <property type="entry name" value="Citrate_synthase_typ-I"/>
</dbReference>
<dbReference type="NCBIfam" id="TIGR01798">
    <property type="entry name" value="cit_synth_I"/>
    <property type="match status" value="1"/>
</dbReference>
<dbReference type="NCBIfam" id="NF004126">
    <property type="entry name" value="PRK05614.1"/>
    <property type="match status" value="1"/>
</dbReference>
<dbReference type="PANTHER" id="PTHR42871">
    <property type="entry name" value="CITRATE SYNTHASE"/>
    <property type="match status" value="1"/>
</dbReference>
<dbReference type="PANTHER" id="PTHR42871:SF1">
    <property type="entry name" value="CITRATE SYNTHASE"/>
    <property type="match status" value="1"/>
</dbReference>
<dbReference type="Pfam" id="PF00285">
    <property type="entry name" value="Citrate_synt"/>
    <property type="match status" value="1"/>
</dbReference>
<dbReference type="PIRSF" id="PIRSF001369">
    <property type="entry name" value="Citrate_synth"/>
    <property type="match status" value="1"/>
</dbReference>
<dbReference type="PRINTS" id="PR00143">
    <property type="entry name" value="CITRTSNTHASE"/>
</dbReference>
<dbReference type="SUPFAM" id="SSF48256">
    <property type="entry name" value="Citrate synthase"/>
    <property type="match status" value="1"/>
</dbReference>
<dbReference type="PROSITE" id="PS00480">
    <property type="entry name" value="CITRATE_SYNTHASE"/>
    <property type="match status" value="1"/>
</dbReference>
<protein>
    <recommendedName>
        <fullName evidence="3">Citrate synthase</fullName>
        <ecNumber evidence="2">2.3.3.16</ecNumber>
    </recommendedName>
</protein>
<sequence length="428" mass="47695">MADKKAQLIIEGSAPVELPVLSGTMGPDVVDVRGLTATGHFTFDPGFMSTASCESKITYIDGDKGVLLHRGYPIEQLAEKSDYLETCYLLLNGELPTAAQKEQFVGTIKNHTMVHEQLKTFFNGFRRDAHPMAVMCGVIGALSAFYHDSLDINNPKHREVSAHRLIAKMPTIAAMVYKYSKGEPMMYPRNDLNYAENFLHMMFNTPCETKPISPVLAKAMDRIFILHADHEQNASTSTVRLAGSSGANPFACIASGIAALWGPAHGGANEAVLRMLDEIGDVSNIDKFVEKAKDKNDPFKLMGFGHRVYKNFDPRAKVMKQTCDEVLQELGINDPQLELAMKLEEIARHDPYFVERNLYPNVDFYSGIILKAIGIPTSMFTVIFALARTVGWISHWQEMLSGPYKIGRPRQLYTGHTQRDFTALKDRG</sequence>
<comment type="catalytic activity">
    <reaction evidence="2">
        <text>oxaloacetate + acetyl-CoA + H2O = citrate + CoA + H(+)</text>
        <dbReference type="Rhea" id="RHEA:16845"/>
        <dbReference type="ChEBI" id="CHEBI:15377"/>
        <dbReference type="ChEBI" id="CHEBI:15378"/>
        <dbReference type="ChEBI" id="CHEBI:16452"/>
        <dbReference type="ChEBI" id="CHEBI:16947"/>
        <dbReference type="ChEBI" id="CHEBI:57287"/>
        <dbReference type="ChEBI" id="CHEBI:57288"/>
        <dbReference type="EC" id="2.3.3.16"/>
    </reaction>
</comment>
<comment type="activity regulation">
    <text evidence="2">Allosterically inhibited by NADH.</text>
</comment>
<comment type="pathway">
    <text>Carbohydrate metabolism; tricarboxylic acid cycle; isocitrate from oxaloacetate: step 1/2.</text>
</comment>
<comment type="subunit">
    <text>Homohexamer.</text>
</comment>
<comment type="miscellaneous">
    <text>Citrate synthase is found in nearly all cells capable of oxidative metabolism.</text>
</comment>
<comment type="similarity">
    <text evidence="4">Belongs to the citrate synthase family.</text>
</comment>
<evidence type="ECO:0000250" key="1">
    <source>
        <dbReference type="UniProtKB" id="P21553"/>
    </source>
</evidence>
<evidence type="ECO:0000269" key="2">
    <source>
    </source>
</evidence>
<evidence type="ECO:0000303" key="3">
    <source>
    </source>
</evidence>
<evidence type="ECO:0000305" key="4"/>
<evidence type="ECO:0007829" key="5">
    <source>
        <dbReference type="PDB" id="6ZU0"/>
    </source>
</evidence>
<accession>P14165</accession>
<name>CISY_PSEAE</name>
<proteinExistence type="evidence at protein level"/>